<sequence>MFIAVEVSPVMEDITRQSKKTSVENETGDDQSATSVVLKAKRKRRSQPRDAPPQRSSVHRGVTRHRWTGRYEAHLWDKNSWNETQTKKGRQVYLGAYDEEDAAARAYDLAALKYWGRDTILNFPLCNYEEDIKEMESQSKEEYIGSLRRKSSGFSRGVSKYRGVAKHHHNGRWEARIGRVFGNKYLYLGTYATQEEAAIAYDIAAIEYRGLNAVTNFDISRYLKLPVPENPIDTANNLLESPHSDLSPFIKPNHESDLSQSQSSSEDNDDRKTKLLKSSPLVAEEVIGPSTPPEIAPPRRSFPEDIQTYFGCQNSGKLTAEEDDVIFGDLDSFLTPDFYSELNDC</sequence>
<feature type="chain" id="PRO_0000290361" description="AP2-like ethylene-responsive transcription factor At1g16060">
    <location>
        <begin position="1"/>
        <end position="345"/>
    </location>
</feature>
<feature type="DNA-binding region" description="AP2/ERF 1" evidence="2">
    <location>
        <begin position="58"/>
        <end position="124"/>
    </location>
</feature>
<feature type="DNA-binding region" description="AP2/ERF 2" evidence="2">
    <location>
        <begin position="160"/>
        <end position="218"/>
    </location>
</feature>
<feature type="region of interest" description="Disordered" evidence="3">
    <location>
        <begin position="15"/>
        <end position="62"/>
    </location>
</feature>
<feature type="region of interest" description="Disordered" evidence="3">
    <location>
        <begin position="243"/>
        <end position="302"/>
    </location>
</feature>
<feature type="splice variant" id="VSP_026147" description="In isoform 2." evidence="4">
    <location>
        <begin position="1"/>
        <end position="70"/>
    </location>
</feature>
<feature type="splice variant" id="VSP_026148" description="In isoform 2." evidence="4">
    <original>YEAHLWDKNSWNETQTKKGRQ</original>
    <variation>MFFFLVLLTMLTGIMADSSRA</variation>
    <location>
        <begin position="71"/>
        <end position="91"/>
    </location>
</feature>
<protein>
    <recommendedName>
        <fullName>AP2-like ethylene-responsive transcription factor At1g16060</fullName>
    </recommendedName>
</protein>
<organism>
    <name type="scientific">Arabidopsis thaliana</name>
    <name type="common">Mouse-ear cress</name>
    <dbReference type="NCBI Taxonomy" id="3702"/>
    <lineage>
        <taxon>Eukaryota</taxon>
        <taxon>Viridiplantae</taxon>
        <taxon>Streptophyta</taxon>
        <taxon>Embryophyta</taxon>
        <taxon>Tracheophyta</taxon>
        <taxon>Spermatophyta</taxon>
        <taxon>Magnoliopsida</taxon>
        <taxon>eudicotyledons</taxon>
        <taxon>Gunneridae</taxon>
        <taxon>Pentapetalae</taxon>
        <taxon>rosids</taxon>
        <taxon>malvids</taxon>
        <taxon>Brassicales</taxon>
        <taxon>Brassicaceae</taxon>
        <taxon>Camelineae</taxon>
        <taxon>Arabidopsis</taxon>
    </lineage>
</organism>
<dbReference type="EMBL" id="AC010924">
    <property type="protein sequence ID" value="AAF18503.1"/>
    <property type="status" value="ALT_SEQ"/>
    <property type="molecule type" value="Genomic_DNA"/>
</dbReference>
<dbReference type="EMBL" id="CP002684">
    <property type="protein sequence ID" value="AEE29405.1"/>
    <property type="molecule type" value="Genomic_DNA"/>
</dbReference>
<dbReference type="EMBL" id="CP002684">
    <property type="protein sequence ID" value="ANM58412.1"/>
    <property type="molecule type" value="Genomic_DNA"/>
</dbReference>
<dbReference type="EMBL" id="AY045915">
    <property type="protein sequence ID" value="AAK76589.1"/>
    <property type="molecule type" value="mRNA"/>
</dbReference>
<dbReference type="EMBL" id="AY133880">
    <property type="protein sequence ID" value="AAM91814.1"/>
    <property type="molecule type" value="mRNA"/>
</dbReference>
<dbReference type="PIR" id="D86295">
    <property type="entry name" value="D86295"/>
</dbReference>
<dbReference type="RefSeq" id="NP_563990.1">
    <molecule id="Q94AN4-1"/>
    <property type="nucleotide sequence ID" value="NM_101474.3"/>
</dbReference>
<dbReference type="RefSeq" id="NP_973839.1">
    <molecule id="Q94AN4-2"/>
    <property type="nucleotide sequence ID" value="NM_202110.2"/>
</dbReference>
<dbReference type="SMR" id="Q94AN4"/>
<dbReference type="BioGRID" id="23416">
    <property type="interactions" value="2"/>
</dbReference>
<dbReference type="FunCoup" id="Q94AN4">
    <property type="interactions" value="23"/>
</dbReference>
<dbReference type="IntAct" id="Q94AN4">
    <property type="interactions" value="1"/>
</dbReference>
<dbReference type="STRING" id="3702.Q94AN4"/>
<dbReference type="iPTMnet" id="Q94AN4"/>
<dbReference type="PaxDb" id="3702-AT1G16060.1"/>
<dbReference type="EnsemblPlants" id="AT1G16060.1">
    <molecule id="Q94AN4-1"/>
    <property type="protein sequence ID" value="AT1G16060.1"/>
    <property type="gene ID" value="AT1G16060"/>
</dbReference>
<dbReference type="EnsemblPlants" id="AT1G16060.3">
    <molecule id="Q94AN4-2"/>
    <property type="protein sequence ID" value="AT1G16060.3"/>
    <property type="gene ID" value="AT1G16060"/>
</dbReference>
<dbReference type="GeneID" id="838176"/>
<dbReference type="Gramene" id="AT1G16060.1">
    <molecule id="Q94AN4-1"/>
    <property type="protein sequence ID" value="AT1G16060.1"/>
    <property type="gene ID" value="AT1G16060"/>
</dbReference>
<dbReference type="Gramene" id="AT1G16060.3">
    <molecule id="Q94AN4-2"/>
    <property type="protein sequence ID" value="AT1G16060.3"/>
    <property type="gene ID" value="AT1G16060"/>
</dbReference>
<dbReference type="KEGG" id="ath:AT1G16060"/>
<dbReference type="Araport" id="AT1G16060"/>
<dbReference type="TAIR" id="AT1G16060">
    <property type="gene designation" value="ADAP"/>
</dbReference>
<dbReference type="eggNOG" id="ENOG502QUXV">
    <property type="taxonomic scope" value="Eukaryota"/>
</dbReference>
<dbReference type="HOGENOM" id="CLU_048809_1_1_1"/>
<dbReference type="InParanoid" id="Q94AN4"/>
<dbReference type="OMA" id="YINWPGP"/>
<dbReference type="PhylomeDB" id="Q94AN4"/>
<dbReference type="PRO" id="PR:Q94AN4"/>
<dbReference type="Proteomes" id="UP000006548">
    <property type="component" value="Chromosome 1"/>
</dbReference>
<dbReference type="ExpressionAtlas" id="Q94AN4">
    <property type="expression patterns" value="baseline and differential"/>
</dbReference>
<dbReference type="GO" id="GO:0005634">
    <property type="term" value="C:nucleus"/>
    <property type="evidence" value="ECO:0007669"/>
    <property type="project" value="UniProtKB-SubCell"/>
</dbReference>
<dbReference type="GO" id="GO:0003677">
    <property type="term" value="F:DNA binding"/>
    <property type="evidence" value="ECO:0007669"/>
    <property type="project" value="UniProtKB-KW"/>
</dbReference>
<dbReference type="GO" id="GO:0003700">
    <property type="term" value="F:DNA-binding transcription factor activity"/>
    <property type="evidence" value="ECO:0000250"/>
    <property type="project" value="TAIR"/>
</dbReference>
<dbReference type="GO" id="GO:0000981">
    <property type="term" value="F:DNA-binding transcription factor activity, RNA polymerase II-specific"/>
    <property type="evidence" value="ECO:0000353"/>
    <property type="project" value="TAIR"/>
</dbReference>
<dbReference type="GO" id="GO:0009873">
    <property type="term" value="P:ethylene-activated signaling pathway"/>
    <property type="evidence" value="ECO:0007669"/>
    <property type="project" value="UniProtKB-KW"/>
</dbReference>
<dbReference type="GO" id="GO:0010187">
    <property type="term" value="P:negative regulation of seed germination"/>
    <property type="evidence" value="ECO:0000315"/>
    <property type="project" value="TAIR"/>
</dbReference>
<dbReference type="GO" id="GO:1901959">
    <property type="term" value="P:positive regulation of cutin biosynthetic process"/>
    <property type="evidence" value="ECO:0000316"/>
    <property type="project" value="TAIR"/>
</dbReference>
<dbReference type="GO" id="GO:0045723">
    <property type="term" value="P:positive regulation of fatty acid biosynthetic process"/>
    <property type="evidence" value="ECO:0000315"/>
    <property type="project" value="TAIR"/>
</dbReference>
<dbReference type="GO" id="GO:0040008">
    <property type="term" value="P:regulation of growth"/>
    <property type="evidence" value="ECO:0000315"/>
    <property type="project" value="TAIR"/>
</dbReference>
<dbReference type="GO" id="GO:0009737">
    <property type="term" value="P:response to abscisic acid"/>
    <property type="evidence" value="ECO:0000315"/>
    <property type="project" value="TAIR"/>
</dbReference>
<dbReference type="GO" id="GO:0009651">
    <property type="term" value="P:response to salt stress"/>
    <property type="evidence" value="ECO:0000315"/>
    <property type="project" value="TAIR"/>
</dbReference>
<dbReference type="GO" id="GO:0009414">
    <property type="term" value="P:response to water deprivation"/>
    <property type="evidence" value="ECO:0000315"/>
    <property type="project" value="TAIR"/>
</dbReference>
<dbReference type="CDD" id="cd00018">
    <property type="entry name" value="AP2"/>
    <property type="match status" value="1"/>
</dbReference>
<dbReference type="FunFam" id="3.30.730.10:FF:000002">
    <property type="entry name" value="AP2-like ethylene-responsive transcription factor"/>
    <property type="match status" value="1"/>
</dbReference>
<dbReference type="FunFam" id="3.30.730.10:FF:000004">
    <property type="entry name" value="AP2-like ethylene-responsive transcription factor"/>
    <property type="match status" value="1"/>
</dbReference>
<dbReference type="Gene3D" id="3.30.730.10">
    <property type="entry name" value="AP2/ERF domain"/>
    <property type="match status" value="2"/>
</dbReference>
<dbReference type="InterPro" id="IPR001471">
    <property type="entry name" value="AP2/ERF_dom"/>
</dbReference>
<dbReference type="InterPro" id="IPR036955">
    <property type="entry name" value="AP2/ERF_dom_sf"/>
</dbReference>
<dbReference type="InterPro" id="IPR016177">
    <property type="entry name" value="DNA-bd_dom_sf"/>
</dbReference>
<dbReference type="PANTHER" id="PTHR32467">
    <property type="entry name" value="AP2-LIKE ETHYLENE-RESPONSIVE TRANSCRIPTION FACTOR"/>
    <property type="match status" value="1"/>
</dbReference>
<dbReference type="PANTHER" id="PTHR32467:SF122">
    <property type="entry name" value="AP2-TYPE TRANSCRIPTION FACTOR"/>
    <property type="match status" value="1"/>
</dbReference>
<dbReference type="Pfam" id="PF00847">
    <property type="entry name" value="AP2"/>
    <property type="match status" value="2"/>
</dbReference>
<dbReference type="PRINTS" id="PR00367">
    <property type="entry name" value="ETHRSPELEMNT"/>
</dbReference>
<dbReference type="SMART" id="SM00380">
    <property type="entry name" value="AP2"/>
    <property type="match status" value="2"/>
</dbReference>
<dbReference type="SUPFAM" id="SSF54171">
    <property type="entry name" value="DNA-binding domain"/>
    <property type="match status" value="2"/>
</dbReference>
<dbReference type="PROSITE" id="PS51032">
    <property type="entry name" value="AP2_ERF"/>
    <property type="match status" value="2"/>
</dbReference>
<accession>Q94AN4</accession>
<accession>Q3EDB4</accession>
<accession>Q9S9M9</accession>
<comment type="function">
    <text evidence="1">Probably acts as a transcriptional activator. Binds to the GCC-box pathogenesis-related promoter element. May be involved in the regulation of gene expression by stress factors and by components of stress signal transduction pathways (By similarity).</text>
</comment>
<comment type="subcellular location">
    <subcellularLocation>
        <location evidence="4">Nucleus</location>
    </subcellularLocation>
</comment>
<comment type="alternative products">
    <event type="alternative splicing"/>
    <isoform>
        <id>Q94AN4-1</id>
        <name>1</name>
        <sequence type="displayed"/>
    </isoform>
    <isoform>
        <id>Q94AN4-2</id>
        <name>2</name>
        <sequence type="described" ref="VSP_026147 VSP_026148"/>
    </isoform>
</comment>
<comment type="similarity">
    <text evidence="4">Belongs to the AP2/ERF transcription factor family. AP2 subfamily.</text>
</comment>
<comment type="sequence caution" evidence="4">
    <conflict type="erroneous gene model prediction">
        <sequence resource="EMBL-CDS" id="AAF18503"/>
    </conflict>
</comment>
<evidence type="ECO:0000250" key="1"/>
<evidence type="ECO:0000255" key="2">
    <source>
        <dbReference type="PROSITE-ProRule" id="PRU00366"/>
    </source>
</evidence>
<evidence type="ECO:0000256" key="3">
    <source>
        <dbReference type="SAM" id="MobiDB-lite"/>
    </source>
</evidence>
<evidence type="ECO:0000305" key="4"/>
<gene>
    <name type="ordered locus">At1g16060</name>
    <name type="ORF">T24D18.16</name>
</gene>
<keyword id="KW-0010">Activator</keyword>
<keyword id="KW-0025">Alternative splicing</keyword>
<keyword id="KW-0238">DNA-binding</keyword>
<keyword id="KW-0936">Ethylene signaling pathway</keyword>
<keyword id="KW-0539">Nucleus</keyword>
<keyword id="KW-1185">Reference proteome</keyword>
<keyword id="KW-0677">Repeat</keyword>
<keyword id="KW-0804">Transcription</keyword>
<keyword id="KW-0805">Transcription regulation</keyword>
<name>AP2L1_ARATH</name>
<reference key="1">
    <citation type="journal article" date="2000" name="Nature">
        <title>Sequence and analysis of chromosome 1 of the plant Arabidopsis thaliana.</title>
        <authorList>
            <person name="Theologis A."/>
            <person name="Ecker J.R."/>
            <person name="Palm C.J."/>
            <person name="Federspiel N.A."/>
            <person name="Kaul S."/>
            <person name="White O."/>
            <person name="Alonso J."/>
            <person name="Altafi H."/>
            <person name="Araujo R."/>
            <person name="Bowman C.L."/>
            <person name="Brooks S.Y."/>
            <person name="Buehler E."/>
            <person name="Chan A."/>
            <person name="Chao Q."/>
            <person name="Chen H."/>
            <person name="Cheuk R.F."/>
            <person name="Chin C.W."/>
            <person name="Chung M.K."/>
            <person name="Conn L."/>
            <person name="Conway A.B."/>
            <person name="Conway A.R."/>
            <person name="Creasy T.H."/>
            <person name="Dewar K."/>
            <person name="Dunn P."/>
            <person name="Etgu P."/>
            <person name="Feldblyum T.V."/>
            <person name="Feng J.-D."/>
            <person name="Fong B."/>
            <person name="Fujii C.Y."/>
            <person name="Gill J.E."/>
            <person name="Goldsmith A.D."/>
            <person name="Haas B."/>
            <person name="Hansen N.F."/>
            <person name="Hughes B."/>
            <person name="Huizar L."/>
            <person name="Hunter J.L."/>
            <person name="Jenkins J."/>
            <person name="Johnson-Hopson C."/>
            <person name="Khan S."/>
            <person name="Khaykin E."/>
            <person name="Kim C.J."/>
            <person name="Koo H.L."/>
            <person name="Kremenetskaia I."/>
            <person name="Kurtz D.B."/>
            <person name="Kwan A."/>
            <person name="Lam B."/>
            <person name="Langin-Hooper S."/>
            <person name="Lee A."/>
            <person name="Lee J.M."/>
            <person name="Lenz C.A."/>
            <person name="Li J.H."/>
            <person name="Li Y.-P."/>
            <person name="Lin X."/>
            <person name="Liu S.X."/>
            <person name="Liu Z.A."/>
            <person name="Luros J.S."/>
            <person name="Maiti R."/>
            <person name="Marziali A."/>
            <person name="Militscher J."/>
            <person name="Miranda M."/>
            <person name="Nguyen M."/>
            <person name="Nierman W.C."/>
            <person name="Osborne B.I."/>
            <person name="Pai G."/>
            <person name="Peterson J."/>
            <person name="Pham P.K."/>
            <person name="Rizzo M."/>
            <person name="Rooney T."/>
            <person name="Rowley D."/>
            <person name="Sakano H."/>
            <person name="Salzberg S.L."/>
            <person name="Schwartz J.R."/>
            <person name="Shinn P."/>
            <person name="Southwick A.M."/>
            <person name="Sun H."/>
            <person name="Tallon L.J."/>
            <person name="Tambunga G."/>
            <person name="Toriumi M.J."/>
            <person name="Town C.D."/>
            <person name="Utterback T."/>
            <person name="Van Aken S."/>
            <person name="Vaysberg M."/>
            <person name="Vysotskaia V.S."/>
            <person name="Walker M."/>
            <person name="Wu D."/>
            <person name="Yu G."/>
            <person name="Fraser C.M."/>
            <person name="Venter J.C."/>
            <person name="Davis R.W."/>
        </authorList>
    </citation>
    <scope>NUCLEOTIDE SEQUENCE [LARGE SCALE GENOMIC DNA]</scope>
    <source>
        <strain>cv. Columbia</strain>
    </source>
</reference>
<reference key="2">
    <citation type="journal article" date="2017" name="Plant J.">
        <title>Araport11: a complete reannotation of the Arabidopsis thaliana reference genome.</title>
        <authorList>
            <person name="Cheng C.Y."/>
            <person name="Krishnakumar V."/>
            <person name="Chan A.P."/>
            <person name="Thibaud-Nissen F."/>
            <person name="Schobel S."/>
            <person name="Town C.D."/>
        </authorList>
    </citation>
    <scope>GENOME REANNOTATION</scope>
    <source>
        <strain>cv. Columbia</strain>
    </source>
</reference>
<reference key="3">
    <citation type="journal article" date="2003" name="Science">
        <title>Empirical analysis of transcriptional activity in the Arabidopsis genome.</title>
        <authorList>
            <person name="Yamada K."/>
            <person name="Lim J."/>
            <person name="Dale J.M."/>
            <person name="Chen H."/>
            <person name="Shinn P."/>
            <person name="Palm C.J."/>
            <person name="Southwick A.M."/>
            <person name="Wu H.C."/>
            <person name="Kim C.J."/>
            <person name="Nguyen M."/>
            <person name="Pham P.K."/>
            <person name="Cheuk R.F."/>
            <person name="Karlin-Newmann G."/>
            <person name="Liu S.X."/>
            <person name="Lam B."/>
            <person name="Sakano H."/>
            <person name="Wu T."/>
            <person name="Yu G."/>
            <person name="Miranda M."/>
            <person name="Quach H.L."/>
            <person name="Tripp M."/>
            <person name="Chang C.H."/>
            <person name="Lee J.M."/>
            <person name="Toriumi M.J."/>
            <person name="Chan M.M."/>
            <person name="Tang C.C."/>
            <person name="Onodera C.S."/>
            <person name="Deng J.M."/>
            <person name="Akiyama K."/>
            <person name="Ansari Y."/>
            <person name="Arakawa T."/>
            <person name="Banh J."/>
            <person name="Banno F."/>
            <person name="Bowser L."/>
            <person name="Brooks S.Y."/>
            <person name="Carninci P."/>
            <person name="Chao Q."/>
            <person name="Choy N."/>
            <person name="Enju A."/>
            <person name="Goldsmith A.D."/>
            <person name="Gurjal M."/>
            <person name="Hansen N.F."/>
            <person name="Hayashizaki Y."/>
            <person name="Johnson-Hopson C."/>
            <person name="Hsuan V.W."/>
            <person name="Iida K."/>
            <person name="Karnes M."/>
            <person name="Khan S."/>
            <person name="Koesema E."/>
            <person name="Ishida J."/>
            <person name="Jiang P.X."/>
            <person name="Jones T."/>
            <person name="Kawai J."/>
            <person name="Kamiya A."/>
            <person name="Meyers C."/>
            <person name="Nakajima M."/>
            <person name="Narusaka M."/>
            <person name="Seki M."/>
            <person name="Sakurai T."/>
            <person name="Satou M."/>
            <person name="Tamse R."/>
            <person name="Vaysberg M."/>
            <person name="Wallender E.K."/>
            <person name="Wong C."/>
            <person name="Yamamura Y."/>
            <person name="Yuan S."/>
            <person name="Shinozaki K."/>
            <person name="Davis R.W."/>
            <person name="Theologis A."/>
            <person name="Ecker J.R."/>
        </authorList>
    </citation>
    <scope>NUCLEOTIDE SEQUENCE [LARGE SCALE MRNA] (ISOFORM 1)</scope>
    <source>
        <strain>cv. Columbia</strain>
    </source>
</reference>
<reference key="4">
    <citation type="journal article" date="2006" name="Plant Physiol.">
        <title>Genome-wide analysis of the ERF gene family in Arabidopsis and rice.</title>
        <authorList>
            <person name="Nakano T."/>
            <person name="Suzuki K."/>
            <person name="Fujimura T."/>
            <person name="Shinshi H."/>
        </authorList>
    </citation>
    <scope>GENE FAMILY</scope>
    <scope>NOMENCLATURE</scope>
</reference>
<proteinExistence type="evidence at transcript level"/>